<dbReference type="EC" id="5.4.3.8" evidence="1"/>
<dbReference type="EMBL" id="CP000909">
    <property type="protein sequence ID" value="ABY35804.1"/>
    <property type="molecule type" value="Genomic_DNA"/>
</dbReference>
<dbReference type="RefSeq" id="WP_012258457.1">
    <property type="nucleotide sequence ID" value="NC_010175.1"/>
</dbReference>
<dbReference type="RefSeq" id="YP_001636193.1">
    <property type="nucleotide sequence ID" value="NC_010175.1"/>
</dbReference>
<dbReference type="SMR" id="A9WIS7"/>
<dbReference type="FunCoup" id="A9WIS7">
    <property type="interactions" value="456"/>
</dbReference>
<dbReference type="STRING" id="324602.Caur_2598"/>
<dbReference type="EnsemblBacteria" id="ABY35804">
    <property type="protein sequence ID" value="ABY35804"/>
    <property type="gene ID" value="Caur_2598"/>
</dbReference>
<dbReference type="KEGG" id="cau:Caur_2598"/>
<dbReference type="PATRIC" id="fig|324602.8.peg.2926"/>
<dbReference type="eggNOG" id="COG0001">
    <property type="taxonomic scope" value="Bacteria"/>
</dbReference>
<dbReference type="HOGENOM" id="CLU_016922_1_5_0"/>
<dbReference type="InParanoid" id="A9WIS7"/>
<dbReference type="UniPathway" id="UPA00251">
    <property type="reaction ID" value="UER00317"/>
</dbReference>
<dbReference type="UniPathway" id="UPA00668"/>
<dbReference type="Proteomes" id="UP000002008">
    <property type="component" value="Chromosome"/>
</dbReference>
<dbReference type="GO" id="GO:0005737">
    <property type="term" value="C:cytoplasm"/>
    <property type="evidence" value="ECO:0007669"/>
    <property type="project" value="UniProtKB-SubCell"/>
</dbReference>
<dbReference type="GO" id="GO:0042286">
    <property type="term" value="F:glutamate-1-semialdehyde 2,1-aminomutase activity"/>
    <property type="evidence" value="ECO:0007669"/>
    <property type="project" value="UniProtKB-UniRule"/>
</dbReference>
<dbReference type="GO" id="GO:0030170">
    <property type="term" value="F:pyridoxal phosphate binding"/>
    <property type="evidence" value="ECO:0007669"/>
    <property type="project" value="InterPro"/>
</dbReference>
<dbReference type="GO" id="GO:0008483">
    <property type="term" value="F:transaminase activity"/>
    <property type="evidence" value="ECO:0007669"/>
    <property type="project" value="InterPro"/>
</dbReference>
<dbReference type="GO" id="GO:0015995">
    <property type="term" value="P:chlorophyll biosynthetic process"/>
    <property type="evidence" value="ECO:0007669"/>
    <property type="project" value="UniProtKB-UniRule"/>
</dbReference>
<dbReference type="GO" id="GO:0006782">
    <property type="term" value="P:protoporphyrinogen IX biosynthetic process"/>
    <property type="evidence" value="ECO:0007669"/>
    <property type="project" value="UniProtKB-UniRule"/>
</dbReference>
<dbReference type="CDD" id="cd00610">
    <property type="entry name" value="OAT_like"/>
    <property type="match status" value="1"/>
</dbReference>
<dbReference type="FunFam" id="3.40.640.10:FF:000021">
    <property type="entry name" value="Glutamate-1-semialdehyde 2,1-aminomutase"/>
    <property type="match status" value="1"/>
</dbReference>
<dbReference type="Gene3D" id="3.90.1150.10">
    <property type="entry name" value="Aspartate Aminotransferase, domain 1"/>
    <property type="match status" value="1"/>
</dbReference>
<dbReference type="Gene3D" id="3.40.640.10">
    <property type="entry name" value="Type I PLP-dependent aspartate aminotransferase-like (Major domain)"/>
    <property type="match status" value="1"/>
</dbReference>
<dbReference type="HAMAP" id="MF_00375">
    <property type="entry name" value="HemL_aminotrans_3"/>
    <property type="match status" value="1"/>
</dbReference>
<dbReference type="InterPro" id="IPR004639">
    <property type="entry name" value="4pyrrol_synth_GluAld_NH2Trfase"/>
</dbReference>
<dbReference type="InterPro" id="IPR005814">
    <property type="entry name" value="Aminotrans_3"/>
</dbReference>
<dbReference type="InterPro" id="IPR049704">
    <property type="entry name" value="Aminotrans_3_PPA_site"/>
</dbReference>
<dbReference type="InterPro" id="IPR015424">
    <property type="entry name" value="PyrdxlP-dep_Trfase"/>
</dbReference>
<dbReference type="InterPro" id="IPR015421">
    <property type="entry name" value="PyrdxlP-dep_Trfase_major"/>
</dbReference>
<dbReference type="InterPro" id="IPR015422">
    <property type="entry name" value="PyrdxlP-dep_Trfase_small"/>
</dbReference>
<dbReference type="NCBIfam" id="TIGR00713">
    <property type="entry name" value="hemL"/>
    <property type="match status" value="1"/>
</dbReference>
<dbReference type="NCBIfam" id="NF000818">
    <property type="entry name" value="PRK00062.1"/>
    <property type="match status" value="1"/>
</dbReference>
<dbReference type="PANTHER" id="PTHR43713">
    <property type="entry name" value="GLUTAMATE-1-SEMIALDEHYDE 2,1-AMINOMUTASE"/>
    <property type="match status" value="1"/>
</dbReference>
<dbReference type="PANTHER" id="PTHR43713:SF3">
    <property type="entry name" value="GLUTAMATE-1-SEMIALDEHYDE 2,1-AMINOMUTASE 1, CHLOROPLASTIC-RELATED"/>
    <property type="match status" value="1"/>
</dbReference>
<dbReference type="Pfam" id="PF00202">
    <property type="entry name" value="Aminotran_3"/>
    <property type="match status" value="1"/>
</dbReference>
<dbReference type="SUPFAM" id="SSF53383">
    <property type="entry name" value="PLP-dependent transferases"/>
    <property type="match status" value="1"/>
</dbReference>
<dbReference type="PROSITE" id="PS00600">
    <property type="entry name" value="AA_TRANSFER_CLASS_3"/>
    <property type="match status" value="1"/>
</dbReference>
<feature type="chain" id="PRO_1000079915" description="Glutamate-1-semialdehyde 2,1-aminomutase">
    <location>
        <begin position="1"/>
        <end position="443"/>
    </location>
</feature>
<feature type="modified residue" description="N6-(pyridoxal phosphate)lysine" evidence="1">
    <location>
        <position position="272"/>
    </location>
</feature>
<name>GSA_CHLAA</name>
<comment type="catalytic activity">
    <reaction evidence="1">
        <text>(S)-4-amino-5-oxopentanoate = 5-aminolevulinate</text>
        <dbReference type="Rhea" id="RHEA:14265"/>
        <dbReference type="ChEBI" id="CHEBI:57501"/>
        <dbReference type="ChEBI" id="CHEBI:356416"/>
        <dbReference type="EC" id="5.4.3.8"/>
    </reaction>
</comment>
<comment type="cofactor">
    <cofactor evidence="1">
        <name>pyridoxal 5'-phosphate</name>
        <dbReference type="ChEBI" id="CHEBI:597326"/>
    </cofactor>
</comment>
<comment type="pathway">
    <text evidence="1">Porphyrin-containing compound metabolism; protoporphyrin-IX biosynthesis; 5-aminolevulinate from L-glutamyl-tRNA(Glu): step 2/2.</text>
</comment>
<comment type="pathway">
    <text evidence="1">Porphyrin-containing compound metabolism; chlorophyll biosynthesis.</text>
</comment>
<comment type="subunit">
    <text evidence="1">Homodimer.</text>
</comment>
<comment type="subcellular location">
    <subcellularLocation>
        <location evidence="1">Cytoplasm</location>
    </subcellularLocation>
</comment>
<comment type="similarity">
    <text evidence="1">Belongs to the class-III pyridoxal-phosphate-dependent aminotransferase family. HemL subfamily.</text>
</comment>
<accession>A9WIS7</accession>
<protein>
    <recommendedName>
        <fullName evidence="1">Glutamate-1-semialdehyde 2,1-aminomutase</fullName>
        <shortName evidence="1">GSA</shortName>
        <ecNumber evidence="1">5.4.3.8</ecNumber>
    </recommendedName>
    <alternativeName>
        <fullName evidence="1">Glutamate-1-semialdehyde aminotransferase</fullName>
        <shortName evidence="1">GSA-AT</shortName>
    </alternativeName>
</protein>
<gene>
    <name evidence="1" type="primary">hemL</name>
    <name type="ordered locus">Caur_2598</name>
</gene>
<organism>
    <name type="scientific">Chloroflexus aurantiacus (strain ATCC 29366 / DSM 635 / J-10-fl)</name>
    <dbReference type="NCBI Taxonomy" id="324602"/>
    <lineage>
        <taxon>Bacteria</taxon>
        <taxon>Bacillati</taxon>
        <taxon>Chloroflexota</taxon>
        <taxon>Chloroflexia</taxon>
        <taxon>Chloroflexales</taxon>
        <taxon>Chloroflexineae</taxon>
        <taxon>Chloroflexaceae</taxon>
        <taxon>Chloroflexus</taxon>
    </lineage>
</organism>
<proteinExistence type="inferred from homology"/>
<evidence type="ECO:0000255" key="1">
    <source>
        <dbReference type="HAMAP-Rule" id="MF_00375"/>
    </source>
</evidence>
<keyword id="KW-0149">Chlorophyll biosynthesis</keyword>
<keyword id="KW-0963">Cytoplasm</keyword>
<keyword id="KW-0413">Isomerase</keyword>
<keyword id="KW-0627">Porphyrin biosynthesis</keyword>
<keyword id="KW-0663">Pyridoxal phosphate</keyword>
<keyword id="KW-1185">Reference proteome</keyword>
<reference key="1">
    <citation type="journal article" date="2011" name="BMC Genomics">
        <title>Complete genome sequence of the filamentous anoxygenic phototrophic bacterium Chloroflexus aurantiacus.</title>
        <authorList>
            <person name="Tang K.H."/>
            <person name="Barry K."/>
            <person name="Chertkov O."/>
            <person name="Dalin E."/>
            <person name="Han C.S."/>
            <person name="Hauser L.J."/>
            <person name="Honchak B.M."/>
            <person name="Karbach L.E."/>
            <person name="Land M.L."/>
            <person name="Lapidus A."/>
            <person name="Larimer F.W."/>
            <person name="Mikhailova N."/>
            <person name="Pitluck S."/>
            <person name="Pierson B.K."/>
            <person name="Blankenship R.E."/>
        </authorList>
    </citation>
    <scope>NUCLEOTIDE SEQUENCE [LARGE SCALE GENOMIC DNA]</scope>
    <source>
        <strain>ATCC 29366 / DSM 635 / J-10-fl</strain>
    </source>
</reference>
<sequence length="443" mass="46746">MSVVTERYSRSQADYAAAREVIPGGVNSPVRAFRGVGGIPIFFERGQGAYVWDVDGNRYIDYVLSWGPLLLGHAHPAVVEAITLQAQRGTSFGAPTELETELARLVIELVPSIEQIRFVNSGTEATMSALRLARAATGRRLIVKFNGCYHGHADMLLVQAGSGVATLGLPDSPGVPPSVAAETITIEYNDLDAAAALFANRGAEIAAVIVEPIAANMGFVLPKPGFLSGLRELTQTHGAIFILDEVMTGFRVAAGGAQALWGLDPDLTCLGKVIGGGLPVGAYAGKRQLMQLVAPAGPMYQAGTLSGNPLAMTAGLTTLRTAFGGDAGAFQQAVTRTARLADGLRMLGERYRIPVQVGNVGTMFGCYFLRQEGSQITSYAEAKAYADSQRYARFFWAMADQGIYLAPSQFEAGFLSTAHSDADIDETLAAAEVAFAGLVSSAE</sequence>